<proteinExistence type="evidence at protein level"/>
<protein>
    <recommendedName>
        <fullName>PDZ and LIM domain protein 1</fullName>
    </recommendedName>
    <alternativeName>
        <fullName>C-terminal LIM domain protein 1</fullName>
    </alternativeName>
    <alternativeName>
        <fullName>Elfin</fullName>
    </alternativeName>
    <alternativeName>
        <fullName>LIM domain protein CLP-36</fullName>
    </alternativeName>
</protein>
<evidence type="ECO:0000250" key="1">
    <source>
        <dbReference type="UniProtKB" id="P52944"/>
    </source>
</evidence>
<evidence type="ECO:0000255" key="2">
    <source>
        <dbReference type="PROSITE-ProRule" id="PRU00125"/>
    </source>
</evidence>
<evidence type="ECO:0000255" key="3">
    <source>
        <dbReference type="PROSITE-ProRule" id="PRU00143"/>
    </source>
</evidence>
<evidence type="ECO:0000269" key="4">
    <source>
    </source>
</evidence>
<evidence type="ECO:0000269" key="5">
    <source>
    </source>
</evidence>
<evidence type="ECO:0000269" key="6">
    <source>
    </source>
</evidence>
<evidence type="ECO:0000269" key="7">
    <source>
    </source>
</evidence>
<evidence type="ECO:0000269" key="8">
    <source>
    </source>
</evidence>
<evidence type="ECO:0000269" key="9">
    <source ref="4"/>
</evidence>
<evidence type="ECO:0000269" key="10">
    <source ref="8"/>
</evidence>
<evidence type="ECO:0000305" key="11"/>
<evidence type="ECO:0007744" key="12">
    <source>
    </source>
</evidence>
<evidence type="ECO:0007744" key="13">
    <source>
    </source>
</evidence>
<evidence type="ECO:0007744" key="14">
    <source>
    </source>
</evidence>
<evidence type="ECO:0007744" key="15">
    <source>
    </source>
</evidence>
<evidence type="ECO:0007744" key="16">
    <source>
    </source>
</evidence>
<evidence type="ECO:0007744" key="17">
    <source>
    </source>
</evidence>
<evidence type="ECO:0007744" key="18">
    <source>
    </source>
</evidence>
<evidence type="ECO:0007744" key="19">
    <source>
    </source>
</evidence>
<evidence type="ECO:0007744" key="20">
    <source>
    </source>
</evidence>
<evidence type="ECO:0007744" key="21">
    <source>
    </source>
</evidence>
<evidence type="ECO:0007744" key="22">
    <source>
    </source>
</evidence>
<evidence type="ECO:0007829" key="23">
    <source>
        <dbReference type="PDB" id="1X62"/>
    </source>
</evidence>
<evidence type="ECO:0007829" key="24">
    <source>
        <dbReference type="PDB" id="2PKT"/>
    </source>
</evidence>
<sequence>MTTQQIDLQGPGPWGFRLVGGKDFEQPLAISRVTPGSKAALANLCIGDVITAIDGENTSNMTHLEAQNRIKGCTDNLTLTVARSEHKVWSPLVTEEGKRHPYKMNLASEPQEVLHIGSAHNRSAMPFTASPASSTTARVITNQYNNPAGLYSSENISNFNNALESKTAASGVEANSRPLDHAQPPSSLVIDKESEVYKMLQEKQELNEPPKQSTSFLVLQEILESEEKGDPNKPSGFRSVKAPVTKVAASIGNAQKLPMCDKCGTGIVGVFVKLRDRHRHPECYVCTDCGTNLKQKGHFFVEDQIYCEKHARERVTPPEGYEVVTVFPK</sequence>
<accession>O00151</accession>
<accession>B2RBS6</accession>
<accession>Q5VZH5</accession>
<accession>Q9BPZ9</accession>
<organism>
    <name type="scientific">Homo sapiens</name>
    <name type="common">Human</name>
    <dbReference type="NCBI Taxonomy" id="9606"/>
    <lineage>
        <taxon>Eukaryota</taxon>
        <taxon>Metazoa</taxon>
        <taxon>Chordata</taxon>
        <taxon>Craniata</taxon>
        <taxon>Vertebrata</taxon>
        <taxon>Euteleostomi</taxon>
        <taxon>Mammalia</taxon>
        <taxon>Eutheria</taxon>
        <taxon>Euarchontoglires</taxon>
        <taxon>Primates</taxon>
        <taxon>Haplorrhini</taxon>
        <taxon>Catarrhini</taxon>
        <taxon>Hominidae</taxon>
        <taxon>Homo</taxon>
    </lineage>
</organism>
<keyword id="KW-0002">3D-structure</keyword>
<keyword id="KW-0007">Acetylation</keyword>
<keyword id="KW-0963">Cytoplasm</keyword>
<keyword id="KW-0206">Cytoskeleton</keyword>
<keyword id="KW-0903">Direct protein sequencing</keyword>
<keyword id="KW-0440">LIM domain</keyword>
<keyword id="KW-0479">Metal-binding</keyword>
<keyword id="KW-0597">Phosphoprotein</keyword>
<keyword id="KW-1267">Proteomics identification</keyword>
<keyword id="KW-1185">Reference proteome</keyword>
<keyword id="KW-0862">Zinc</keyword>
<reference key="1">
    <citation type="journal article" date="1999" name="J. Cell. Biochem.">
        <title>Characterization of the human 36-kDa carboxyl terminal LIM domain protein (hCLIM1).</title>
        <authorList>
            <person name="Kotaka M."/>
            <person name="Ngai S.M."/>
            <person name="Garcia-Barcelo M."/>
            <person name="Tsui S.K.W."/>
            <person name="Fung K.P."/>
            <person name="Lee C.Y."/>
            <person name="Waye M.M.Y."/>
        </authorList>
    </citation>
    <scope>NUCLEOTIDE SEQUENCE [MRNA]</scope>
    <source>
        <tissue>Heart</tissue>
    </source>
</reference>
<reference key="2">
    <citation type="journal article" date="2000" name="Blood">
        <title>Human CLP-36, a PDZ-domain and LIM-domain protein, binds to alpha-actinin-1 and associates with actin filaments and stress fibers in activated platelets and endothelial cells.</title>
        <authorList>
            <person name="Bauer K."/>
            <person name="Kratzer M."/>
            <person name="Otte M."/>
            <person name="Luber de Quintana K."/>
            <person name="Hagmann J."/>
            <person name="Arnold G.J."/>
            <person name="Eckerskorn C."/>
            <person name="Lottspeich F."/>
            <person name="Siess W."/>
        </authorList>
    </citation>
    <scope>NUCLEOTIDE SEQUENCE [MRNA]</scope>
    <scope>INTERACTION WITH ACTN1</scope>
    <scope>SUBCELLULAR LOCATION</scope>
</reference>
<reference key="3">
    <citation type="journal article" date="2004" name="Nat. Genet.">
        <title>Complete sequencing and characterization of 21,243 full-length human cDNAs.</title>
        <authorList>
            <person name="Ota T."/>
            <person name="Suzuki Y."/>
            <person name="Nishikawa T."/>
            <person name="Otsuki T."/>
            <person name="Sugiyama T."/>
            <person name="Irie R."/>
            <person name="Wakamatsu A."/>
            <person name="Hayashi K."/>
            <person name="Sato H."/>
            <person name="Nagai K."/>
            <person name="Kimura K."/>
            <person name="Makita H."/>
            <person name="Sekine M."/>
            <person name="Obayashi M."/>
            <person name="Nishi T."/>
            <person name="Shibahara T."/>
            <person name="Tanaka T."/>
            <person name="Ishii S."/>
            <person name="Yamamoto J."/>
            <person name="Saito K."/>
            <person name="Kawai Y."/>
            <person name="Isono Y."/>
            <person name="Nakamura Y."/>
            <person name="Nagahari K."/>
            <person name="Murakami K."/>
            <person name="Yasuda T."/>
            <person name="Iwayanagi T."/>
            <person name="Wagatsuma M."/>
            <person name="Shiratori A."/>
            <person name="Sudo H."/>
            <person name="Hosoiri T."/>
            <person name="Kaku Y."/>
            <person name="Kodaira H."/>
            <person name="Kondo H."/>
            <person name="Sugawara M."/>
            <person name="Takahashi M."/>
            <person name="Kanda K."/>
            <person name="Yokoi T."/>
            <person name="Furuya T."/>
            <person name="Kikkawa E."/>
            <person name="Omura Y."/>
            <person name="Abe K."/>
            <person name="Kamihara K."/>
            <person name="Katsuta N."/>
            <person name="Sato K."/>
            <person name="Tanikawa M."/>
            <person name="Yamazaki M."/>
            <person name="Ninomiya K."/>
            <person name="Ishibashi T."/>
            <person name="Yamashita H."/>
            <person name="Murakawa K."/>
            <person name="Fujimori K."/>
            <person name="Tanai H."/>
            <person name="Kimata M."/>
            <person name="Watanabe M."/>
            <person name="Hiraoka S."/>
            <person name="Chiba Y."/>
            <person name="Ishida S."/>
            <person name="Ono Y."/>
            <person name="Takiguchi S."/>
            <person name="Watanabe S."/>
            <person name="Yosida M."/>
            <person name="Hotuta T."/>
            <person name="Kusano J."/>
            <person name="Kanehori K."/>
            <person name="Takahashi-Fujii A."/>
            <person name="Hara H."/>
            <person name="Tanase T.-O."/>
            <person name="Nomura Y."/>
            <person name="Togiya S."/>
            <person name="Komai F."/>
            <person name="Hara R."/>
            <person name="Takeuchi K."/>
            <person name="Arita M."/>
            <person name="Imose N."/>
            <person name="Musashino K."/>
            <person name="Yuuki H."/>
            <person name="Oshima A."/>
            <person name="Sasaki N."/>
            <person name="Aotsuka S."/>
            <person name="Yoshikawa Y."/>
            <person name="Matsunawa H."/>
            <person name="Ichihara T."/>
            <person name="Shiohata N."/>
            <person name="Sano S."/>
            <person name="Moriya S."/>
            <person name="Momiyama H."/>
            <person name="Satoh N."/>
            <person name="Takami S."/>
            <person name="Terashima Y."/>
            <person name="Suzuki O."/>
            <person name="Nakagawa S."/>
            <person name="Senoh A."/>
            <person name="Mizoguchi H."/>
            <person name="Goto Y."/>
            <person name="Shimizu F."/>
            <person name="Wakebe H."/>
            <person name="Hishigaki H."/>
            <person name="Watanabe T."/>
            <person name="Sugiyama A."/>
            <person name="Takemoto M."/>
            <person name="Kawakami B."/>
            <person name="Yamazaki M."/>
            <person name="Watanabe K."/>
            <person name="Kumagai A."/>
            <person name="Itakura S."/>
            <person name="Fukuzumi Y."/>
            <person name="Fujimori Y."/>
            <person name="Komiyama M."/>
            <person name="Tashiro H."/>
            <person name="Tanigami A."/>
            <person name="Fujiwara T."/>
            <person name="Ono T."/>
            <person name="Yamada K."/>
            <person name="Fujii Y."/>
            <person name="Ozaki K."/>
            <person name="Hirao M."/>
            <person name="Ohmori Y."/>
            <person name="Kawabata A."/>
            <person name="Hikiji T."/>
            <person name="Kobatake N."/>
            <person name="Inagaki H."/>
            <person name="Ikema Y."/>
            <person name="Okamoto S."/>
            <person name="Okitani R."/>
            <person name="Kawakami T."/>
            <person name="Noguchi S."/>
            <person name="Itoh T."/>
            <person name="Shigeta K."/>
            <person name="Senba T."/>
            <person name="Matsumura K."/>
            <person name="Nakajima Y."/>
            <person name="Mizuno T."/>
            <person name="Morinaga M."/>
            <person name="Sasaki M."/>
            <person name="Togashi T."/>
            <person name="Oyama M."/>
            <person name="Hata H."/>
            <person name="Watanabe M."/>
            <person name="Komatsu T."/>
            <person name="Mizushima-Sugano J."/>
            <person name="Satoh T."/>
            <person name="Shirai Y."/>
            <person name="Takahashi Y."/>
            <person name="Nakagawa K."/>
            <person name="Okumura K."/>
            <person name="Nagase T."/>
            <person name="Nomura N."/>
            <person name="Kikuchi H."/>
            <person name="Masuho Y."/>
            <person name="Yamashita R."/>
            <person name="Nakai K."/>
            <person name="Yada T."/>
            <person name="Nakamura Y."/>
            <person name="Ohara O."/>
            <person name="Isogai T."/>
            <person name="Sugano S."/>
        </authorList>
    </citation>
    <scope>NUCLEOTIDE SEQUENCE [LARGE SCALE MRNA]</scope>
    <scope>VARIANT SER-175</scope>
</reference>
<reference key="4">
    <citation type="submission" date="2005-02" db="EMBL/GenBank/DDBJ databases">
        <authorList>
            <consortium name="NIEHS SNPs program"/>
        </authorList>
    </citation>
    <scope>NUCLEOTIDE SEQUENCE [GENOMIC DNA]</scope>
    <scope>VARIANT SER-175</scope>
</reference>
<reference key="5">
    <citation type="journal article" date="2004" name="Nature">
        <title>The DNA sequence and comparative analysis of human chromosome 10.</title>
        <authorList>
            <person name="Deloukas P."/>
            <person name="Earthrowl M.E."/>
            <person name="Grafham D.V."/>
            <person name="Rubenfield M."/>
            <person name="French L."/>
            <person name="Steward C.A."/>
            <person name="Sims S.K."/>
            <person name="Jones M.C."/>
            <person name="Searle S."/>
            <person name="Scott C."/>
            <person name="Howe K."/>
            <person name="Hunt S.E."/>
            <person name="Andrews T.D."/>
            <person name="Gilbert J.G.R."/>
            <person name="Swarbreck D."/>
            <person name="Ashurst J.L."/>
            <person name="Taylor A."/>
            <person name="Battles J."/>
            <person name="Bird C.P."/>
            <person name="Ainscough R."/>
            <person name="Almeida J.P."/>
            <person name="Ashwell R.I.S."/>
            <person name="Ambrose K.D."/>
            <person name="Babbage A.K."/>
            <person name="Bagguley C.L."/>
            <person name="Bailey J."/>
            <person name="Banerjee R."/>
            <person name="Bates K."/>
            <person name="Beasley H."/>
            <person name="Bray-Allen S."/>
            <person name="Brown A.J."/>
            <person name="Brown J.Y."/>
            <person name="Burford D.C."/>
            <person name="Burrill W."/>
            <person name="Burton J."/>
            <person name="Cahill P."/>
            <person name="Camire D."/>
            <person name="Carter N.P."/>
            <person name="Chapman J.C."/>
            <person name="Clark S.Y."/>
            <person name="Clarke G."/>
            <person name="Clee C.M."/>
            <person name="Clegg S."/>
            <person name="Corby N."/>
            <person name="Coulson A."/>
            <person name="Dhami P."/>
            <person name="Dutta I."/>
            <person name="Dunn M."/>
            <person name="Faulkner L."/>
            <person name="Frankish A."/>
            <person name="Frankland J.A."/>
            <person name="Garner P."/>
            <person name="Garnett J."/>
            <person name="Gribble S."/>
            <person name="Griffiths C."/>
            <person name="Grocock R."/>
            <person name="Gustafson E."/>
            <person name="Hammond S."/>
            <person name="Harley J.L."/>
            <person name="Hart E."/>
            <person name="Heath P.D."/>
            <person name="Ho T.P."/>
            <person name="Hopkins B."/>
            <person name="Horne J."/>
            <person name="Howden P.J."/>
            <person name="Huckle E."/>
            <person name="Hynds C."/>
            <person name="Johnson C."/>
            <person name="Johnson D."/>
            <person name="Kana A."/>
            <person name="Kay M."/>
            <person name="Kimberley A.M."/>
            <person name="Kershaw J.K."/>
            <person name="Kokkinaki M."/>
            <person name="Laird G.K."/>
            <person name="Lawlor S."/>
            <person name="Lee H.M."/>
            <person name="Leongamornlert D.A."/>
            <person name="Laird G."/>
            <person name="Lloyd C."/>
            <person name="Lloyd D.M."/>
            <person name="Loveland J."/>
            <person name="Lovell J."/>
            <person name="McLaren S."/>
            <person name="McLay K.E."/>
            <person name="McMurray A."/>
            <person name="Mashreghi-Mohammadi M."/>
            <person name="Matthews L."/>
            <person name="Milne S."/>
            <person name="Nickerson T."/>
            <person name="Nguyen M."/>
            <person name="Overton-Larty E."/>
            <person name="Palmer S.A."/>
            <person name="Pearce A.V."/>
            <person name="Peck A.I."/>
            <person name="Pelan S."/>
            <person name="Phillimore B."/>
            <person name="Porter K."/>
            <person name="Rice C.M."/>
            <person name="Rogosin A."/>
            <person name="Ross M.T."/>
            <person name="Sarafidou T."/>
            <person name="Sehra H.K."/>
            <person name="Shownkeen R."/>
            <person name="Skuce C.D."/>
            <person name="Smith M."/>
            <person name="Standring L."/>
            <person name="Sycamore N."/>
            <person name="Tester J."/>
            <person name="Thorpe A."/>
            <person name="Torcasso W."/>
            <person name="Tracey A."/>
            <person name="Tromans A."/>
            <person name="Tsolas J."/>
            <person name="Wall M."/>
            <person name="Walsh J."/>
            <person name="Wang H."/>
            <person name="Weinstock K."/>
            <person name="West A.P."/>
            <person name="Willey D.L."/>
            <person name="Whitehead S.L."/>
            <person name="Wilming L."/>
            <person name="Wray P.W."/>
            <person name="Young L."/>
            <person name="Chen Y."/>
            <person name="Lovering R.C."/>
            <person name="Moschonas N.K."/>
            <person name="Siebert R."/>
            <person name="Fechtel K."/>
            <person name="Bentley D."/>
            <person name="Durbin R.M."/>
            <person name="Hubbard T."/>
            <person name="Doucette-Stamm L."/>
            <person name="Beck S."/>
            <person name="Smith D.R."/>
            <person name="Rogers J."/>
        </authorList>
    </citation>
    <scope>NUCLEOTIDE SEQUENCE [LARGE SCALE GENOMIC DNA]</scope>
</reference>
<reference key="6">
    <citation type="journal article" date="2004" name="Genome Res.">
        <title>The status, quality, and expansion of the NIH full-length cDNA project: the Mammalian Gene Collection (MGC).</title>
        <authorList>
            <consortium name="The MGC Project Team"/>
        </authorList>
    </citation>
    <scope>NUCLEOTIDE SEQUENCE [LARGE SCALE MRNA]</scope>
    <source>
        <tissue>Pancreas</tissue>
        <tissue>Placenta</tissue>
    </source>
</reference>
<reference key="7">
    <citation type="journal article" date="2003" name="Nat. Biotechnol.">
        <title>Exploring proteomes and analyzing protein processing by mass spectrometric identification of sorted N-terminal peptides.</title>
        <authorList>
            <person name="Gevaert K."/>
            <person name="Goethals M."/>
            <person name="Martens L."/>
            <person name="Van Damme J."/>
            <person name="Staes A."/>
            <person name="Thomas G.R."/>
            <person name="Vandekerckhove J."/>
        </authorList>
    </citation>
    <scope>PROTEIN SEQUENCE OF 2-17</scope>
    <source>
        <tissue>Platelet</tissue>
    </source>
</reference>
<reference key="8">
    <citation type="submission" date="2005-11" db="UniProtKB">
        <authorList>
            <person name="Bienvenut W.V."/>
            <person name="Claeys D."/>
        </authorList>
    </citation>
    <scope>PROTEIN SEQUENCE OF 2-17; 23-32; 139-166; 212-238 AND 247-256</scope>
    <scope>CLEAVAGE OF INITIATOR METHIONINE</scope>
    <scope>ACETYLATION AT THR-2</scope>
    <scope>IDENTIFICATION BY MASS SPECTROMETRY</scope>
    <source>
        <tissue>Platelet</tissue>
    </source>
</reference>
<reference key="9">
    <citation type="journal article" date="2000" name="J. Cell. Biochem.">
        <title>Interaction of hCLIM1, an enigma family protein, with alpha-actinin 2.</title>
        <authorList>
            <person name="Kotaka M."/>
            <person name="Kostin S."/>
            <person name="Ngai S."/>
            <person name="Chan K."/>
            <person name="Lau Y."/>
            <person name="Lee S.M."/>
            <person name="Li H.Y."/>
            <person name="Ng E.K."/>
            <person name="Schaper J."/>
            <person name="Tsui S.K.W."/>
            <person name="Fung K.P."/>
            <person name="Lee C.Y."/>
            <person name="Waye M.M.Y."/>
        </authorList>
    </citation>
    <scope>FUNCTION</scope>
    <scope>INTERACTION WITH ACTN2</scope>
    <scope>SUBCELLULAR LOCATION</scope>
</reference>
<reference key="10">
    <citation type="journal article" date="2000" name="J. Biol. Chem.">
        <title>CLP-36 PDZ-LIM protein associates with nonmuscle alpha-actinin-1 and alpha-actinin-4.</title>
        <authorList>
            <person name="Vallenius T."/>
            <person name="Luukko K."/>
            <person name="Makela T.P."/>
        </authorList>
    </citation>
    <scope>INTERACTION WITH ACTN1 AND ACTN4</scope>
</reference>
<reference key="11">
    <citation type="journal article" date="2004" name="Anal. Chem.">
        <title>Robust phosphoproteomic profiling of tyrosine phosphorylation sites from human T cells using immobilized metal affinity chromatography and tandem mass spectrometry.</title>
        <authorList>
            <person name="Brill L.M."/>
            <person name="Salomon A.R."/>
            <person name="Ficarro S.B."/>
            <person name="Mukherji M."/>
            <person name="Stettler-Gill M."/>
            <person name="Peters E.C."/>
        </authorList>
    </citation>
    <scope>PHOSPHORYLATION [LARGE SCALE ANALYSIS] AT TYR-321</scope>
    <scope>IDENTIFICATION BY MASS SPECTROMETRY [LARGE SCALE ANALYSIS]</scope>
    <source>
        <tissue>Leukemic T-cell</tissue>
    </source>
</reference>
<reference key="12">
    <citation type="journal article" date="2005" name="Nat. Biotechnol.">
        <title>Immunoaffinity profiling of tyrosine phosphorylation in cancer cells.</title>
        <authorList>
            <person name="Rush J."/>
            <person name="Moritz A."/>
            <person name="Lee K.A."/>
            <person name="Guo A."/>
            <person name="Goss V.L."/>
            <person name="Spek E.J."/>
            <person name="Zhang H."/>
            <person name="Zha X.-M."/>
            <person name="Polakiewicz R.D."/>
            <person name="Comb M.J."/>
        </authorList>
    </citation>
    <scope>PHOSPHORYLATION [LARGE SCALE ANALYSIS] AT TYR-144</scope>
    <scope>IDENTIFICATION BY MASS SPECTROMETRY [LARGE SCALE ANALYSIS]</scope>
</reference>
<reference key="13">
    <citation type="journal article" date="2007" name="J. Proteome Res.">
        <title>Improved titanium dioxide enrichment of phosphopeptides from HeLa cells and high confident phosphopeptide identification by cross-validation of MS/MS and MS/MS/MS spectra.</title>
        <authorList>
            <person name="Yu L.R."/>
            <person name="Zhu Z."/>
            <person name="Chan K.C."/>
            <person name="Issaq H.J."/>
            <person name="Dimitrov D.S."/>
            <person name="Veenstra T.D."/>
        </authorList>
    </citation>
    <scope>PHOSPHORYLATION [LARGE SCALE ANALYSIS] AT SER-90</scope>
    <scope>IDENTIFICATION BY MASS SPECTROMETRY [LARGE SCALE ANALYSIS]</scope>
    <source>
        <tissue>Cervix carcinoma</tissue>
    </source>
</reference>
<reference key="14">
    <citation type="journal article" date="2008" name="J. Proteome Res.">
        <title>Phosphoproteome of resting human platelets.</title>
        <authorList>
            <person name="Zahedi R.P."/>
            <person name="Lewandrowski U."/>
            <person name="Wiesner J."/>
            <person name="Wortelkamp S."/>
            <person name="Moebius J."/>
            <person name="Schuetz C."/>
            <person name="Walter U."/>
            <person name="Gambaryan S."/>
            <person name="Sickmann A."/>
        </authorList>
    </citation>
    <scope>PHOSPHORYLATION [LARGE SCALE ANALYSIS] AT SER-90</scope>
    <scope>IDENTIFICATION BY MASS SPECTROMETRY [LARGE SCALE ANALYSIS]</scope>
    <source>
        <tissue>Platelet</tissue>
    </source>
</reference>
<reference key="15">
    <citation type="journal article" date="2008" name="Proc. Natl. Acad. Sci. U.S.A.">
        <title>A quantitative atlas of mitotic phosphorylation.</title>
        <authorList>
            <person name="Dephoure N."/>
            <person name="Zhou C."/>
            <person name="Villen J."/>
            <person name="Beausoleil S.A."/>
            <person name="Bakalarski C.E."/>
            <person name="Elledge S.J."/>
            <person name="Gygi S.P."/>
        </authorList>
    </citation>
    <scope>PHOSPHORYLATION [LARGE SCALE ANALYSIS] AT SER-90</scope>
    <scope>IDENTIFICATION BY MASS SPECTROMETRY [LARGE SCALE ANALYSIS]</scope>
    <source>
        <tissue>Cervix carcinoma</tissue>
    </source>
</reference>
<reference key="16">
    <citation type="journal article" date="2009" name="Anal. Chem.">
        <title>Lys-N and trypsin cover complementary parts of the phosphoproteome in a refined SCX-based approach.</title>
        <authorList>
            <person name="Gauci S."/>
            <person name="Helbig A.O."/>
            <person name="Slijper M."/>
            <person name="Krijgsveld J."/>
            <person name="Heck A.J."/>
            <person name="Mohammed S."/>
        </authorList>
    </citation>
    <scope>ACETYLATION [LARGE SCALE ANALYSIS] AT THR-2</scope>
    <scope>CLEAVAGE OF INITIATOR METHIONINE [LARGE SCALE ANALYSIS]</scope>
    <scope>IDENTIFICATION BY MASS SPECTROMETRY [LARGE SCALE ANALYSIS]</scope>
</reference>
<reference key="17">
    <citation type="journal article" date="2009" name="Sci. Signal.">
        <title>Quantitative phosphoproteomic analysis of T cell receptor signaling reveals system-wide modulation of protein-protein interactions.</title>
        <authorList>
            <person name="Mayya V."/>
            <person name="Lundgren D.H."/>
            <person name="Hwang S.-I."/>
            <person name="Rezaul K."/>
            <person name="Wu L."/>
            <person name="Eng J.K."/>
            <person name="Rodionov V."/>
            <person name="Han D.K."/>
        </authorList>
    </citation>
    <scope>IDENTIFICATION BY MASS SPECTROMETRY [LARGE SCALE ANALYSIS]</scope>
    <source>
        <tissue>Leukemic T-cell</tissue>
    </source>
</reference>
<reference key="18">
    <citation type="journal article" date="2010" name="Sci. Signal.">
        <title>Quantitative phosphoproteomics reveals widespread full phosphorylation site occupancy during mitosis.</title>
        <authorList>
            <person name="Olsen J.V."/>
            <person name="Vermeulen M."/>
            <person name="Santamaria A."/>
            <person name="Kumar C."/>
            <person name="Miller M.L."/>
            <person name="Jensen L.J."/>
            <person name="Gnad F."/>
            <person name="Cox J."/>
            <person name="Jensen T.S."/>
            <person name="Nigg E.A."/>
            <person name="Brunak S."/>
            <person name="Mann M."/>
        </authorList>
    </citation>
    <scope>PHOSPHORYLATION [LARGE SCALE ANALYSIS] AT SER-90 AND SER-130</scope>
    <scope>IDENTIFICATION BY MASS SPECTROMETRY [LARGE SCALE ANALYSIS]</scope>
    <source>
        <tissue>Cervix carcinoma</tissue>
    </source>
</reference>
<reference key="19">
    <citation type="journal article" date="2011" name="BMC Syst. Biol.">
        <title>Initial characterization of the human central proteome.</title>
        <authorList>
            <person name="Burkard T.R."/>
            <person name="Planyavsky M."/>
            <person name="Kaupe I."/>
            <person name="Breitwieser F.P."/>
            <person name="Buerckstuemmer T."/>
            <person name="Bennett K.L."/>
            <person name="Superti-Furga G."/>
            <person name="Colinge J."/>
        </authorList>
    </citation>
    <scope>IDENTIFICATION BY MASS SPECTROMETRY [LARGE SCALE ANALYSIS]</scope>
</reference>
<reference key="20">
    <citation type="journal article" date="2011" name="Sci. Signal.">
        <title>System-wide temporal characterization of the proteome and phosphoproteome of human embryonic stem cell differentiation.</title>
        <authorList>
            <person name="Rigbolt K.T."/>
            <person name="Prokhorova T.A."/>
            <person name="Akimov V."/>
            <person name="Henningsen J."/>
            <person name="Johansen P.T."/>
            <person name="Kratchmarova I."/>
            <person name="Kassem M."/>
            <person name="Mann M."/>
            <person name="Olsen J.V."/>
            <person name="Blagoev B."/>
        </authorList>
    </citation>
    <scope>PHOSPHORYLATION [LARGE SCALE ANALYSIS] AT SER-90</scope>
    <scope>IDENTIFICATION BY MASS SPECTROMETRY [LARGE SCALE ANALYSIS]</scope>
</reference>
<reference key="21">
    <citation type="journal article" date="2012" name="Proc. Natl. Acad. Sci. U.S.A.">
        <title>N-terminal acetylome analyses and functional insights of the N-terminal acetyltransferase NatB.</title>
        <authorList>
            <person name="Van Damme P."/>
            <person name="Lasa M."/>
            <person name="Polevoda B."/>
            <person name="Gazquez C."/>
            <person name="Elosegui-Artola A."/>
            <person name="Kim D.S."/>
            <person name="De Juan-Pardo E."/>
            <person name="Demeyer K."/>
            <person name="Hole K."/>
            <person name="Larrea E."/>
            <person name="Timmerman E."/>
            <person name="Prieto J."/>
            <person name="Arnesen T."/>
            <person name="Sherman F."/>
            <person name="Gevaert K."/>
            <person name="Aldabe R."/>
        </authorList>
    </citation>
    <scope>ACETYLATION [LARGE SCALE ANALYSIS] AT THR-2</scope>
    <scope>CLEAVAGE OF INITIATOR METHIONINE [LARGE SCALE ANALYSIS]</scope>
    <scope>IDENTIFICATION BY MASS SPECTROMETRY [LARGE SCALE ANALYSIS]</scope>
</reference>
<reference key="22">
    <citation type="journal article" date="2013" name="J. Proteome Res.">
        <title>Toward a comprehensive characterization of a human cancer cell phosphoproteome.</title>
        <authorList>
            <person name="Zhou H."/>
            <person name="Di Palma S."/>
            <person name="Preisinger C."/>
            <person name="Peng M."/>
            <person name="Polat A.N."/>
            <person name="Heck A.J."/>
            <person name="Mohammed S."/>
        </authorList>
    </citation>
    <scope>PHOSPHORYLATION [LARGE SCALE ANALYSIS] AT SER-90; SER-130 AND THR-316</scope>
    <scope>IDENTIFICATION BY MASS SPECTROMETRY [LARGE SCALE ANALYSIS]</scope>
    <source>
        <tissue>Cervix carcinoma</tissue>
        <tissue>Erythroleukemia</tissue>
    </source>
</reference>
<reference key="23">
    <citation type="journal article" date="2014" name="J. Proteomics">
        <title>An enzyme assisted RP-RPLC approach for in-depth analysis of human liver phosphoproteome.</title>
        <authorList>
            <person name="Bian Y."/>
            <person name="Song C."/>
            <person name="Cheng K."/>
            <person name="Dong M."/>
            <person name="Wang F."/>
            <person name="Huang J."/>
            <person name="Sun D."/>
            <person name="Wang L."/>
            <person name="Ye M."/>
            <person name="Zou H."/>
        </authorList>
    </citation>
    <scope>PHOSPHORYLATION [LARGE SCALE ANALYSIS] AT SER-90</scope>
    <scope>IDENTIFICATION BY MASS SPECTROMETRY [LARGE SCALE ANALYSIS]</scope>
    <source>
        <tissue>Liver</tissue>
    </source>
</reference>
<reference key="24">
    <citation type="submission" date="2005-11" db="PDB data bank">
        <title>Solution structure of the LIM domain of carboxyl terminal LIM domain protein 1.</title>
        <authorList>
            <consortium name="RIKEN structural genomics initiative (RSGI)"/>
        </authorList>
    </citation>
    <scope>STRUCTURE BY NMR OF 250-315</scope>
    <scope>ZINC-BINDING SITES</scope>
</reference>
<comment type="function">
    <text evidence="1 5">Cytoskeletal protein that may act as an adapter that brings other proteins (like kinases) to the cytoskeleton (PubMed:10861853). Involved in assembly, disassembly and directioning of stress fibers in fibroblasts. Required for the localization of ACTN1 and PALLD to stress fibers. Required for cell migration and in maintaining cell polarity of fibroblasts (By similarity).</text>
</comment>
<comment type="subunit">
    <text evidence="1 4 5 6">Interacts with ACTN1, ACTN2 and ACTN4 (PubMed:10753915, PubMed:10861853, PubMed:11110697). Interacts with PDLIM4 (By similarity).</text>
</comment>
<comment type="interaction">
    <interactant intactId="EBI-724897">
        <id>O00151</id>
    </interactant>
    <interactant intactId="EBI-351526">
        <id>O43707</id>
        <label>ACTN4</label>
    </interactant>
    <organismsDiffer>false</organismsDiffer>
    <experiments>6</experiments>
</comment>
<comment type="interaction">
    <interactant intactId="EBI-724897">
        <id>O00151</id>
    </interactant>
    <interactant intactId="EBI-744302">
        <id>P14136</id>
        <label>GFAP</label>
    </interactant>
    <organismsDiffer>false</organismsDiffer>
    <experiments>4</experiments>
</comment>
<comment type="interaction">
    <interactant intactId="EBI-724897">
        <id>O00151</id>
    </interactant>
    <interactant intactId="EBI-13346145">
        <id>Q8N7B1</id>
        <label>HORMAD2</label>
    </interactant>
    <organismsDiffer>false</organismsDiffer>
    <experiments>2</experiments>
</comment>
<comment type="interaction">
    <interactant intactId="EBI-724897">
        <id>O00151</id>
    </interactant>
    <interactant intactId="EBI-958408">
        <id>P48551</id>
        <label>IFNAR2</label>
    </interactant>
    <organismsDiffer>false</organismsDiffer>
    <experiments>2</experiments>
</comment>
<comment type="subcellular location">
    <subcellularLocation>
        <location evidence="5 6">Cytoplasm</location>
    </subcellularLocation>
    <subcellularLocation>
        <location evidence="5 6">Cytoplasm</location>
        <location evidence="5 6">Cytoskeleton</location>
    </subcellularLocation>
    <subcellularLocation>
        <location evidence="5">Cytoplasm</location>
        <location evidence="5">Myofibril</location>
        <location evidence="5">Sarcomere</location>
        <location evidence="5">Z line</location>
    </subcellularLocation>
    <text evidence="6">Associates with actin stress fibers.</text>
</comment>
<comment type="tissue specificity">
    <text>Strongly expressed in the heart and skeletal muscle, moderately expressed in the spleen, small intestine, colon, placenta, and lung. A lower level expression is seen in liver, thymus, kidney, prostate and pancreas and is not found in the brain, testis, ovary, and peripheral blood leukocytes.</text>
</comment>
<dbReference type="EMBL" id="U90878">
    <property type="protein sequence ID" value="AAC05580.1"/>
    <property type="molecule type" value="mRNA"/>
</dbReference>
<dbReference type="EMBL" id="AJ310549">
    <property type="protein sequence ID" value="CAC32846.1"/>
    <property type="molecule type" value="mRNA"/>
</dbReference>
<dbReference type="EMBL" id="AK314792">
    <property type="protein sequence ID" value="BAG37323.1"/>
    <property type="molecule type" value="mRNA"/>
</dbReference>
<dbReference type="EMBL" id="AY923052">
    <property type="protein sequence ID" value="AAW82438.1"/>
    <property type="molecule type" value="Genomic_DNA"/>
</dbReference>
<dbReference type="EMBL" id="AL160288">
    <property type="status" value="NOT_ANNOTATED_CDS"/>
    <property type="molecule type" value="Genomic_DNA"/>
</dbReference>
<dbReference type="EMBL" id="AL157834">
    <property type="status" value="NOT_ANNOTATED_CDS"/>
    <property type="molecule type" value="Genomic_DNA"/>
</dbReference>
<dbReference type="EMBL" id="BC000915">
    <property type="protein sequence ID" value="AAH00915.1"/>
    <property type="molecule type" value="mRNA"/>
</dbReference>
<dbReference type="EMBL" id="BC018755">
    <property type="protein sequence ID" value="AAH18755.1"/>
    <property type="molecule type" value="mRNA"/>
</dbReference>
<dbReference type="CCDS" id="CCDS7441.1"/>
<dbReference type="RefSeq" id="NP_066272.1">
    <property type="nucleotide sequence ID" value="NM_020992.4"/>
</dbReference>
<dbReference type="PDB" id="1X62">
    <property type="method" value="NMR"/>
    <property type="chains" value="A=250-315"/>
</dbReference>
<dbReference type="PDB" id="2PKT">
    <property type="method" value="X-ray"/>
    <property type="resolution" value="1.50 A"/>
    <property type="chains" value="A=1-86"/>
</dbReference>
<dbReference type="PDBsum" id="1X62"/>
<dbReference type="PDBsum" id="2PKT"/>
<dbReference type="BMRB" id="O00151"/>
<dbReference type="SMR" id="O00151"/>
<dbReference type="BioGRID" id="114572">
    <property type="interactions" value="132"/>
</dbReference>
<dbReference type="CORUM" id="O00151"/>
<dbReference type="FunCoup" id="O00151">
    <property type="interactions" value="366"/>
</dbReference>
<dbReference type="IntAct" id="O00151">
    <property type="interactions" value="55"/>
</dbReference>
<dbReference type="MINT" id="O00151"/>
<dbReference type="STRING" id="9606.ENSP00000360305"/>
<dbReference type="GlyCosmos" id="O00151">
    <property type="glycosylation" value="4 sites, 1 glycan"/>
</dbReference>
<dbReference type="GlyGen" id="O00151">
    <property type="glycosylation" value="13 sites, 1 N-linked glycan (1 site), 2 O-linked glycans (11 sites)"/>
</dbReference>
<dbReference type="iPTMnet" id="O00151"/>
<dbReference type="MetOSite" id="O00151"/>
<dbReference type="PhosphoSitePlus" id="O00151"/>
<dbReference type="SwissPalm" id="O00151"/>
<dbReference type="BioMuta" id="PDLIM1"/>
<dbReference type="OGP" id="O00151"/>
<dbReference type="CPTAC" id="CPTAC-1441"/>
<dbReference type="CPTAC" id="CPTAC-1442"/>
<dbReference type="CPTAC" id="CPTAC-1443"/>
<dbReference type="CPTAC" id="CPTAC-1444"/>
<dbReference type="jPOST" id="O00151"/>
<dbReference type="MassIVE" id="O00151"/>
<dbReference type="PaxDb" id="9606-ENSP00000360305"/>
<dbReference type="PeptideAtlas" id="O00151"/>
<dbReference type="ProteomicsDB" id="47736"/>
<dbReference type="Pumba" id="O00151"/>
<dbReference type="Antibodypedia" id="1897">
    <property type="antibodies" value="410 antibodies from 39 providers"/>
</dbReference>
<dbReference type="CPTC" id="O00151">
    <property type="antibodies" value="3 antibodies"/>
</dbReference>
<dbReference type="DNASU" id="9124"/>
<dbReference type="Ensembl" id="ENST00000329399.7">
    <property type="protein sequence ID" value="ENSP00000360305.3"/>
    <property type="gene ID" value="ENSG00000107438.9"/>
</dbReference>
<dbReference type="GeneID" id="9124"/>
<dbReference type="KEGG" id="hsa:9124"/>
<dbReference type="MANE-Select" id="ENST00000329399.7">
    <property type="protein sequence ID" value="ENSP00000360305.3"/>
    <property type="RefSeq nucleotide sequence ID" value="NM_020992.4"/>
    <property type="RefSeq protein sequence ID" value="NP_066272.1"/>
</dbReference>
<dbReference type="AGR" id="HGNC:2067"/>
<dbReference type="CTD" id="9124"/>
<dbReference type="DisGeNET" id="9124"/>
<dbReference type="GeneCards" id="PDLIM1"/>
<dbReference type="HGNC" id="HGNC:2067">
    <property type="gene designation" value="PDLIM1"/>
</dbReference>
<dbReference type="HPA" id="ENSG00000107438">
    <property type="expression patterns" value="Tissue enhanced (skeletal)"/>
</dbReference>
<dbReference type="MIM" id="605900">
    <property type="type" value="gene"/>
</dbReference>
<dbReference type="neXtProt" id="NX_O00151"/>
<dbReference type="OpenTargets" id="ENSG00000107438"/>
<dbReference type="PharmGKB" id="PA33158"/>
<dbReference type="VEuPathDB" id="HostDB:ENSG00000107438"/>
<dbReference type="eggNOG" id="KOG1703">
    <property type="taxonomic scope" value="Eukaryota"/>
</dbReference>
<dbReference type="GeneTree" id="ENSGT00940000155525"/>
<dbReference type="HOGENOM" id="CLU_038114_1_1_1"/>
<dbReference type="InParanoid" id="O00151"/>
<dbReference type="OMA" id="QIYCETH"/>
<dbReference type="OrthoDB" id="1293114at2759"/>
<dbReference type="PAN-GO" id="O00151">
    <property type="GO annotations" value="9 GO annotations based on evolutionary models"/>
</dbReference>
<dbReference type="PhylomeDB" id="O00151"/>
<dbReference type="TreeFam" id="TF106408"/>
<dbReference type="PathwayCommons" id="O00151"/>
<dbReference type="SignaLink" id="O00151"/>
<dbReference type="BioGRID-ORCS" id="9124">
    <property type="hits" value="11 hits in 1160 CRISPR screens"/>
</dbReference>
<dbReference type="CD-CODE" id="DEE660B4">
    <property type="entry name" value="Stress granule"/>
</dbReference>
<dbReference type="ChiTaRS" id="PDLIM1">
    <property type="organism name" value="human"/>
</dbReference>
<dbReference type="EvolutionaryTrace" id="O00151"/>
<dbReference type="GeneWiki" id="PDLIM1"/>
<dbReference type="GenomeRNAi" id="9124"/>
<dbReference type="Pharos" id="O00151">
    <property type="development level" value="Tbio"/>
</dbReference>
<dbReference type="PRO" id="PR:O00151"/>
<dbReference type="Proteomes" id="UP000005640">
    <property type="component" value="Chromosome 10"/>
</dbReference>
<dbReference type="RNAct" id="O00151">
    <property type="molecule type" value="protein"/>
</dbReference>
<dbReference type="Bgee" id="ENSG00000107438">
    <property type="expression patterns" value="Expressed in lower lobe of lung and 199 other cell types or tissues"/>
</dbReference>
<dbReference type="ExpressionAtlas" id="O00151">
    <property type="expression patterns" value="baseline and differential"/>
</dbReference>
<dbReference type="GO" id="GO:0005912">
    <property type="term" value="C:adherens junction"/>
    <property type="evidence" value="ECO:0007005"/>
    <property type="project" value="BHF-UCL"/>
</dbReference>
<dbReference type="GO" id="GO:0005737">
    <property type="term" value="C:cytoplasm"/>
    <property type="evidence" value="ECO:0000314"/>
    <property type="project" value="UniProtKB"/>
</dbReference>
<dbReference type="GO" id="GO:0005856">
    <property type="term" value="C:cytoskeleton"/>
    <property type="evidence" value="ECO:0000314"/>
    <property type="project" value="UniProtKB"/>
</dbReference>
<dbReference type="GO" id="GO:0031941">
    <property type="term" value="C:filamentous actin"/>
    <property type="evidence" value="ECO:0000318"/>
    <property type="project" value="GO_Central"/>
</dbReference>
<dbReference type="GO" id="GO:0005925">
    <property type="term" value="C:focal adhesion"/>
    <property type="evidence" value="ECO:0007005"/>
    <property type="project" value="UniProtKB"/>
</dbReference>
<dbReference type="GO" id="GO:0001725">
    <property type="term" value="C:stress fiber"/>
    <property type="evidence" value="ECO:0000314"/>
    <property type="project" value="UniProtKB"/>
</dbReference>
<dbReference type="GO" id="GO:0005667">
    <property type="term" value="C:transcription regulator complex"/>
    <property type="evidence" value="ECO:0007669"/>
    <property type="project" value="Ensembl"/>
</dbReference>
<dbReference type="GO" id="GO:0030018">
    <property type="term" value="C:Z disc"/>
    <property type="evidence" value="ECO:0000314"/>
    <property type="project" value="UniProtKB"/>
</dbReference>
<dbReference type="GO" id="GO:0003779">
    <property type="term" value="F:actin binding"/>
    <property type="evidence" value="ECO:0000250"/>
    <property type="project" value="UniProtKB"/>
</dbReference>
<dbReference type="GO" id="GO:0098641">
    <property type="term" value="F:cadherin binding involved in cell-cell adhesion"/>
    <property type="evidence" value="ECO:0007005"/>
    <property type="project" value="BHF-UCL"/>
</dbReference>
<dbReference type="GO" id="GO:0046872">
    <property type="term" value="F:metal ion binding"/>
    <property type="evidence" value="ECO:0007669"/>
    <property type="project" value="UniProtKB-KW"/>
</dbReference>
<dbReference type="GO" id="GO:0051371">
    <property type="term" value="F:muscle alpha-actinin binding"/>
    <property type="evidence" value="ECO:0000318"/>
    <property type="project" value="GO_Central"/>
</dbReference>
<dbReference type="GO" id="GO:0003713">
    <property type="term" value="F:transcription coactivator activity"/>
    <property type="evidence" value="ECO:0007669"/>
    <property type="project" value="Ensembl"/>
</dbReference>
<dbReference type="GO" id="GO:0030036">
    <property type="term" value="P:actin cytoskeleton organization"/>
    <property type="evidence" value="ECO:0000250"/>
    <property type="project" value="UniProtKB"/>
</dbReference>
<dbReference type="GO" id="GO:0030950">
    <property type="term" value="P:establishment or maintenance of actin cytoskeleton polarity"/>
    <property type="evidence" value="ECO:0000250"/>
    <property type="project" value="UniProtKB"/>
</dbReference>
<dbReference type="GO" id="GO:0010761">
    <property type="term" value="P:fibroblast migration"/>
    <property type="evidence" value="ECO:0000250"/>
    <property type="project" value="UniProtKB"/>
</dbReference>
<dbReference type="GO" id="GO:0007507">
    <property type="term" value="P:heart development"/>
    <property type="evidence" value="ECO:0000318"/>
    <property type="project" value="GO_Central"/>
</dbReference>
<dbReference type="GO" id="GO:0030011">
    <property type="term" value="P:maintenance of cell polarity"/>
    <property type="evidence" value="ECO:0000250"/>
    <property type="project" value="UniProtKB"/>
</dbReference>
<dbReference type="GO" id="GO:0061061">
    <property type="term" value="P:muscle structure development"/>
    <property type="evidence" value="ECO:0000318"/>
    <property type="project" value="GO_Central"/>
</dbReference>
<dbReference type="GO" id="GO:0006357">
    <property type="term" value="P:regulation of transcription by RNA polymerase II"/>
    <property type="evidence" value="ECO:0007669"/>
    <property type="project" value="Ensembl"/>
</dbReference>
<dbReference type="GO" id="GO:0001666">
    <property type="term" value="P:response to hypoxia"/>
    <property type="evidence" value="ECO:0007669"/>
    <property type="project" value="Ensembl"/>
</dbReference>
<dbReference type="GO" id="GO:0006979">
    <property type="term" value="P:response to oxidative stress"/>
    <property type="evidence" value="ECO:0000304"/>
    <property type="project" value="ProtInc"/>
</dbReference>
<dbReference type="GO" id="GO:0043149">
    <property type="term" value="P:stress fiber assembly"/>
    <property type="evidence" value="ECO:0000250"/>
    <property type="project" value="UniProtKB"/>
</dbReference>
<dbReference type="CDD" id="cd09448">
    <property type="entry name" value="LIM_CLP36"/>
    <property type="match status" value="1"/>
</dbReference>
<dbReference type="CDD" id="cd06753">
    <property type="entry name" value="PDZ_PDLIM-like"/>
    <property type="match status" value="1"/>
</dbReference>
<dbReference type="FunFam" id="2.30.42.10:FF:000320">
    <property type="entry name" value="PDZ and LIM domain 1"/>
    <property type="match status" value="1"/>
</dbReference>
<dbReference type="FunFam" id="2.10.110.10:FF:000026">
    <property type="entry name" value="PDZ and LIM domain protein 3"/>
    <property type="match status" value="1"/>
</dbReference>
<dbReference type="Gene3D" id="2.30.42.10">
    <property type="match status" value="1"/>
</dbReference>
<dbReference type="Gene3D" id="2.10.110.10">
    <property type="entry name" value="Cysteine Rich Protein"/>
    <property type="match status" value="1"/>
</dbReference>
<dbReference type="InterPro" id="IPR031847">
    <property type="entry name" value="PDLI1-4/Zasp-like_mid"/>
</dbReference>
<dbReference type="InterPro" id="IPR028537">
    <property type="entry name" value="PDLIM1_LIM"/>
</dbReference>
<dbReference type="InterPro" id="IPR001478">
    <property type="entry name" value="PDZ"/>
</dbReference>
<dbReference type="InterPro" id="IPR050604">
    <property type="entry name" value="PDZ-LIM_domain"/>
</dbReference>
<dbReference type="InterPro" id="IPR036034">
    <property type="entry name" value="PDZ_sf"/>
</dbReference>
<dbReference type="InterPro" id="IPR006643">
    <property type="entry name" value="Zasp-like_motif"/>
</dbReference>
<dbReference type="InterPro" id="IPR001781">
    <property type="entry name" value="Znf_LIM"/>
</dbReference>
<dbReference type="PANTHER" id="PTHR24214:SF5">
    <property type="entry name" value="PDZ AND LIM DOMAIN PROTEIN 1"/>
    <property type="match status" value="1"/>
</dbReference>
<dbReference type="PANTHER" id="PTHR24214">
    <property type="entry name" value="PDZ AND LIM DOMAIN PROTEIN ZASP"/>
    <property type="match status" value="1"/>
</dbReference>
<dbReference type="Pfam" id="PF15936">
    <property type="entry name" value="DUF4749"/>
    <property type="match status" value="1"/>
</dbReference>
<dbReference type="Pfam" id="PF00412">
    <property type="entry name" value="LIM"/>
    <property type="match status" value="1"/>
</dbReference>
<dbReference type="Pfam" id="PF00595">
    <property type="entry name" value="PDZ"/>
    <property type="match status" value="1"/>
</dbReference>
<dbReference type="SMART" id="SM00132">
    <property type="entry name" value="LIM"/>
    <property type="match status" value="1"/>
</dbReference>
<dbReference type="SMART" id="SM00228">
    <property type="entry name" value="PDZ"/>
    <property type="match status" value="1"/>
</dbReference>
<dbReference type="SMART" id="SM00735">
    <property type="entry name" value="ZM"/>
    <property type="match status" value="1"/>
</dbReference>
<dbReference type="SUPFAM" id="SSF57716">
    <property type="entry name" value="Glucocorticoid receptor-like (DNA-binding domain)"/>
    <property type="match status" value="2"/>
</dbReference>
<dbReference type="SUPFAM" id="SSF50156">
    <property type="entry name" value="PDZ domain-like"/>
    <property type="match status" value="1"/>
</dbReference>
<dbReference type="PROSITE" id="PS00478">
    <property type="entry name" value="LIM_DOMAIN_1"/>
    <property type="match status" value="1"/>
</dbReference>
<dbReference type="PROSITE" id="PS50023">
    <property type="entry name" value="LIM_DOMAIN_2"/>
    <property type="match status" value="1"/>
</dbReference>
<dbReference type="PROSITE" id="PS50106">
    <property type="entry name" value="PDZ"/>
    <property type="match status" value="1"/>
</dbReference>
<name>PDLI1_HUMAN</name>
<feature type="initiator methionine" description="Removed" evidence="7 10 17 20">
    <location>
        <position position="1"/>
    </location>
</feature>
<feature type="chain" id="PRO_0000075859" description="PDZ and LIM domain protein 1">
    <location>
        <begin position="2"/>
        <end position="329"/>
    </location>
</feature>
<feature type="domain" description="PDZ" evidence="3">
    <location>
        <begin position="3"/>
        <end position="85"/>
    </location>
</feature>
<feature type="domain" description="LIM zinc-binding" evidence="2">
    <location>
        <begin position="258"/>
        <end position="317"/>
    </location>
</feature>
<feature type="binding site">
    <location>
        <position position="260"/>
    </location>
    <ligand>
        <name>Zn(2+)</name>
        <dbReference type="ChEBI" id="CHEBI:29105"/>
        <label>1</label>
    </ligand>
</feature>
<feature type="binding site">
    <location>
        <position position="263"/>
    </location>
    <ligand>
        <name>Zn(2+)</name>
        <dbReference type="ChEBI" id="CHEBI:29105"/>
        <label>1</label>
    </ligand>
</feature>
<feature type="binding site">
    <location>
        <position position="280"/>
    </location>
    <ligand>
        <name>Zn(2+)</name>
        <dbReference type="ChEBI" id="CHEBI:29105"/>
        <label>1</label>
    </ligand>
</feature>
<feature type="binding site">
    <location>
        <position position="283"/>
    </location>
    <ligand>
        <name>Zn(2+)</name>
        <dbReference type="ChEBI" id="CHEBI:29105"/>
        <label>1</label>
    </ligand>
</feature>
<feature type="binding site">
    <location>
        <position position="286"/>
    </location>
    <ligand>
        <name>Zn(2+)</name>
        <dbReference type="ChEBI" id="CHEBI:29105"/>
        <label>2</label>
    </ligand>
</feature>
<feature type="binding site">
    <location>
        <position position="289"/>
    </location>
    <ligand>
        <name>Zn(2+)</name>
        <dbReference type="ChEBI" id="CHEBI:29105"/>
        <label>2</label>
    </ligand>
</feature>
<feature type="binding site">
    <location>
        <position position="307"/>
    </location>
    <ligand>
        <name>Zn(2+)</name>
        <dbReference type="ChEBI" id="CHEBI:29105"/>
        <label>2</label>
    </ligand>
</feature>
<feature type="binding site">
    <location>
        <position position="310"/>
    </location>
    <ligand>
        <name>Zn(2+)</name>
        <dbReference type="ChEBI" id="CHEBI:29105"/>
        <label>2</label>
    </ligand>
</feature>
<feature type="modified residue" description="N-acetylthreonine" evidence="10 17 20">
    <location>
        <position position="2"/>
    </location>
</feature>
<feature type="modified residue" description="Phosphoserine" evidence="14 15 16 18 19 21 22">
    <location>
        <position position="90"/>
    </location>
</feature>
<feature type="modified residue" description="Phosphoserine" evidence="18 21">
    <location>
        <position position="130"/>
    </location>
</feature>
<feature type="modified residue" description="Phosphotyrosine" evidence="13">
    <location>
        <position position="144"/>
    </location>
</feature>
<feature type="modified residue" description="Phosphothreonine" evidence="21">
    <location>
        <position position="316"/>
    </location>
</feature>
<feature type="modified residue" description="Phosphotyrosine" evidence="12">
    <location>
        <position position="321"/>
    </location>
</feature>
<feature type="sequence variant" id="VAR_022271" description="In dbSNP:rs2296961." evidence="8 9">
    <original>N</original>
    <variation>S</variation>
    <location>
        <position position="175"/>
    </location>
</feature>
<feature type="sequence conflict" description="In Ref. 1; AAC05580." evidence="11" ref="1">
    <original>G</original>
    <variation>R</variation>
    <location>
        <position position="21"/>
    </location>
</feature>
<feature type="strand" evidence="24">
    <location>
        <begin position="2"/>
        <end position="12"/>
    </location>
</feature>
<feature type="strand" evidence="24">
    <location>
        <begin position="15"/>
        <end position="21"/>
    </location>
</feature>
<feature type="helix" evidence="24">
    <location>
        <begin position="22"/>
        <end position="24"/>
    </location>
</feature>
<feature type="strand" evidence="24">
    <location>
        <begin position="26"/>
        <end position="33"/>
    </location>
</feature>
<feature type="helix" evidence="24">
    <location>
        <begin position="38"/>
        <end position="41"/>
    </location>
</feature>
<feature type="strand" evidence="24">
    <location>
        <begin position="49"/>
        <end position="53"/>
    </location>
</feature>
<feature type="helix" evidence="24">
    <location>
        <begin position="63"/>
        <end position="71"/>
    </location>
</feature>
<feature type="strand" evidence="24">
    <location>
        <begin position="74"/>
        <end position="84"/>
    </location>
</feature>
<feature type="strand" evidence="23">
    <location>
        <begin position="261"/>
        <end position="263"/>
    </location>
</feature>
<feature type="turn" evidence="23">
    <location>
        <begin position="281"/>
        <end position="284"/>
    </location>
</feature>
<feature type="strand" evidence="23">
    <location>
        <begin position="287"/>
        <end position="289"/>
    </location>
</feature>
<feature type="helix" evidence="23">
    <location>
        <begin position="293"/>
        <end position="296"/>
    </location>
</feature>
<feature type="strand" evidence="23">
    <location>
        <begin position="299"/>
        <end position="303"/>
    </location>
</feature>
<feature type="helix" evidence="23">
    <location>
        <begin position="308"/>
        <end position="315"/>
    </location>
</feature>
<gene>
    <name type="primary">PDLIM1</name>
    <name type="synonym">CLIM1</name>
    <name type="synonym">CLP36</name>
</gene>